<dbReference type="EC" id="3.6.5.-" evidence="1"/>
<dbReference type="EMBL" id="CP000868">
    <property type="protein sequence ID" value="ABX16484.1"/>
    <property type="molecule type" value="Genomic_DNA"/>
</dbReference>
<dbReference type="EMBL" id="AP009385">
    <property type="protein sequence ID" value="BAG42404.1"/>
    <property type="molecule type" value="Genomic_DNA"/>
</dbReference>
<dbReference type="SMR" id="A9AI60"/>
<dbReference type="STRING" id="395019.BMULJ_00437"/>
<dbReference type="KEGG" id="bmj:BMULJ_00437"/>
<dbReference type="KEGG" id="bmu:Bmul_2800"/>
<dbReference type="eggNOG" id="COG0536">
    <property type="taxonomic scope" value="Bacteria"/>
</dbReference>
<dbReference type="HOGENOM" id="CLU_011747_2_0_4"/>
<dbReference type="Proteomes" id="UP000008815">
    <property type="component" value="Chromosome 1"/>
</dbReference>
<dbReference type="GO" id="GO:0005737">
    <property type="term" value="C:cytoplasm"/>
    <property type="evidence" value="ECO:0007669"/>
    <property type="project" value="UniProtKB-SubCell"/>
</dbReference>
<dbReference type="GO" id="GO:0005525">
    <property type="term" value="F:GTP binding"/>
    <property type="evidence" value="ECO:0007669"/>
    <property type="project" value="UniProtKB-UniRule"/>
</dbReference>
<dbReference type="GO" id="GO:0003924">
    <property type="term" value="F:GTPase activity"/>
    <property type="evidence" value="ECO:0007669"/>
    <property type="project" value="UniProtKB-UniRule"/>
</dbReference>
<dbReference type="GO" id="GO:0000287">
    <property type="term" value="F:magnesium ion binding"/>
    <property type="evidence" value="ECO:0007669"/>
    <property type="project" value="InterPro"/>
</dbReference>
<dbReference type="GO" id="GO:0042254">
    <property type="term" value="P:ribosome biogenesis"/>
    <property type="evidence" value="ECO:0007669"/>
    <property type="project" value="UniProtKB-UniRule"/>
</dbReference>
<dbReference type="CDD" id="cd01898">
    <property type="entry name" value="Obg"/>
    <property type="match status" value="1"/>
</dbReference>
<dbReference type="FunFam" id="2.70.210.12:FF:000001">
    <property type="entry name" value="GTPase Obg"/>
    <property type="match status" value="1"/>
</dbReference>
<dbReference type="Gene3D" id="2.70.210.12">
    <property type="entry name" value="GTP1/OBG domain"/>
    <property type="match status" value="1"/>
</dbReference>
<dbReference type="Gene3D" id="3.40.50.300">
    <property type="entry name" value="P-loop containing nucleotide triphosphate hydrolases"/>
    <property type="match status" value="1"/>
</dbReference>
<dbReference type="HAMAP" id="MF_01454">
    <property type="entry name" value="GTPase_Obg"/>
    <property type="match status" value="1"/>
</dbReference>
<dbReference type="InterPro" id="IPR031167">
    <property type="entry name" value="G_OBG"/>
</dbReference>
<dbReference type="InterPro" id="IPR006073">
    <property type="entry name" value="GTP-bd"/>
</dbReference>
<dbReference type="InterPro" id="IPR014100">
    <property type="entry name" value="GTP-bd_Obg/CgtA"/>
</dbReference>
<dbReference type="InterPro" id="IPR006074">
    <property type="entry name" value="GTP1-OBG_CS"/>
</dbReference>
<dbReference type="InterPro" id="IPR006169">
    <property type="entry name" value="GTP1_OBG_dom"/>
</dbReference>
<dbReference type="InterPro" id="IPR036726">
    <property type="entry name" value="GTP1_OBG_dom_sf"/>
</dbReference>
<dbReference type="InterPro" id="IPR045086">
    <property type="entry name" value="OBG_GTPase"/>
</dbReference>
<dbReference type="InterPro" id="IPR027417">
    <property type="entry name" value="P-loop_NTPase"/>
</dbReference>
<dbReference type="NCBIfam" id="TIGR02729">
    <property type="entry name" value="Obg_CgtA"/>
    <property type="match status" value="1"/>
</dbReference>
<dbReference type="NCBIfam" id="NF008954">
    <property type="entry name" value="PRK12296.1"/>
    <property type="match status" value="1"/>
</dbReference>
<dbReference type="NCBIfam" id="NF008955">
    <property type="entry name" value="PRK12297.1"/>
    <property type="match status" value="1"/>
</dbReference>
<dbReference type="NCBIfam" id="NF008956">
    <property type="entry name" value="PRK12299.1"/>
    <property type="match status" value="1"/>
</dbReference>
<dbReference type="PANTHER" id="PTHR11702">
    <property type="entry name" value="DEVELOPMENTALLY REGULATED GTP-BINDING PROTEIN-RELATED"/>
    <property type="match status" value="1"/>
</dbReference>
<dbReference type="PANTHER" id="PTHR11702:SF31">
    <property type="entry name" value="MITOCHONDRIAL RIBOSOME-ASSOCIATED GTPASE 2"/>
    <property type="match status" value="1"/>
</dbReference>
<dbReference type="Pfam" id="PF01018">
    <property type="entry name" value="GTP1_OBG"/>
    <property type="match status" value="1"/>
</dbReference>
<dbReference type="Pfam" id="PF01926">
    <property type="entry name" value="MMR_HSR1"/>
    <property type="match status" value="1"/>
</dbReference>
<dbReference type="PIRSF" id="PIRSF002401">
    <property type="entry name" value="GTP_bd_Obg/CgtA"/>
    <property type="match status" value="1"/>
</dbReference>
<dbReference type="PRINTS" id="PR00326">
    <property type="entry name" value="GTP1OBG"/>
</dbReference>
<dbReference type="SUPFAM" id="SSF82051">
    <property type="entry name" value="Obg GTP-binding protein N-terminal domain"/>
    <property type="match status" value="1"/>
</dbReference>
<dbReference type="SUPFAM" id="SSF52540">
    <property type="entry name" value="P-loop containing nucleoside triphosphate hydrolases"/>
    <property type="match status" value="1"/>
</dbReference>
<dbReference type="PROSITE" id="PS51710">
    <property type="entry name" value="G_OBG"/>
    <property type="match status" value="1"/>
</dbReference>
<dbReference type="PROSITE" id="PS00905">
    <property type="entry name" value="GTP1_OBG"/>
    <property type="match status" value="1"/>
</dbReference>
<dbReference type="PROSITE" id="PS51883">
    <property type="entry name" value="OBG"/>
    <property type="match status" value="1"/>
</dbReference>
<feature type="chain" id="PRO_0000385786" description="GTPase Obg">
    <location>
        <begin position="1"/>
        <end position="369"/>
    </location>
</feature>
<feature type="domain" description="Obg" evidence="2">
    <location>
        <begin position="1"/>
        <end position="159"/>
    </location>
</feature>
<feature type="domain" description="OBG-type G" evidence="1">
    <location>
        <begin position="160"/>
        <end position="334"/>
    </location>
</feature>
<feature type="region of interest" description="Disordered" evidence="3">
    <location>
        <begin position="128"/>
        <end position="147"/>
    </location>
</feature>
<feature type="binding site" evidence="1">
    <location>
        <begin position="166"/>
        <end position="173"/>
    </location>
    <ligand>
        <name>GTP</name>
        <dbReference type="ChEBI" id="CHEBI:37565"/>
    </ligand>
</feature>
<feature type="binding site" evidence="1">
    <location>
        <position position="173"/>
    </location>
    <ligand>
        <name>Mg(2+)</name>
        <dbReference type="ChEBI" id="CHEBI:18420"/>
    </ligand>
</feature>
<feature type="binding site" evidence="1">
    <location>
        <begin position="191"/>
        <end position="195"/>
    </location>
    <ligand>
        <name>GTP</name>
        <dbReference type="ChEBI" id="CHEBI:37565"/>
    </ligand>
</feature>
<feature type="binding site" evidence="1">
    <location>
        <position position="193"/>
    </location>
    <ligand>
        <name>Mg(2+)</name>
        <dbReference type="ChEBI" id="CHEBI:18420"/>
    </ligand>
</feature>
<feature type="binding site" evidence="1">
    <location>
        <begin position="213"/>
        <end position="216"/>
    </location>
    <ligand>
        <name>GTP</name>
        <dbReference type="ChEBI" id="CHEBI:37565"/>
    </ligand>
</feature>
<feature type="binding site" evidence="1">
    <location>
        <begin position="284"/>
        <end position="287"/>
    </location>
    <ligand>
        <name>GTP</name>
        <dbReference type="ChEBI" id="CHEBI:37565"/>
    </ligand>
</feature>
<feature type="binding site" evidence="1">
    <location>
        <begin position="315"/>
        <end position="317"/>
    </location>
    <ligand>
        <name>GTP</name>
        <dbReference type="ChEBI" id="CHEBI:37565"/>
    </ligand>
</feature>
<protein>
    <recommendedName>
        <fullName evidence="1">GTPase Obg</fullName>
        <ecNumber evidence="1">3.6.5.-</ecNumber>
    </recommendedName>
    <alternativeName>
        <fullName evidence="1">GTP-binding protein Obg</fullName>
    </alternativeName>
</protein>
<comment type="function">
    <text evidence="1">An essential GTPase which binds GTP, GDP and possibly (p)ppGpp with moderate affinity, with high nucleotide exchange rates and a fairly low GTP hydrolysis rate. Plays a role in control of the cell cycle, stress response, ribosome biogenesis and in those bacteria that undergo differentiation, in morphogenesis control.</text>
</comment>
<comment type="cofactor">
    <cofactor evidence="1">
        <name>Mg(2+)</name>
        <dbReference type="ChEBI" id="CHEBI:18420"/>
    </cofactor>
</comment>
<comment type="subunit">
    <text evidence="1">Monomer.</text>
</comment>
<comment type="subcellular location">
    <subcellularLocation>
        <location evidence="1">Cytoplasm</location>
    </subcellularLocation>
</comment>
<comment type="similarity">
    <text evidence="1">Belongs to the TRAFAC class OBG-HflX-like GTPase superfamily. OBG GTPase family.</text>
</comment>
<sequence length="369" mass="39541">MKFIDEARIEVIAGDGGDGSASMRREKFVPFGGPDGGDGGRGGSVYAIADRNINTLIDYRYAKKHLARNGENGRGSDCYGKGGDDITLRMPVGTVITDMDTGELIADLTEHDQQVLLAKGGAGGLGNLHFKSSTNRAPRQKTDGKPGERRMLKLELKVLADVGLLGMPNAGKSTFISSVSNAKPKIADYPFTTLAPNLGVVRVGPSKSFVIADIPGLIEGAAEGAGLGHQFLRHLQRTGLLLHLVDIAPFDEGVDPVAEATAIVGELRKYDEALYEKPRWLVLNKLDMVPEDERAARVADFLERFDWHGPVFEISALTGQGCEALCYAIYDYLAEHSDAHRAAEAEDLAADVRFRDAPPAANAAPGDDA</sequence>
<accession>A9AI60</accession>
<reference key="1">
    <citation type="submission" date="2007-10" db="EMBL/GenBank/DDBJ databases">
        <title>Complete sequence of chromosome 1 of Burkholderia multivorans ATCC 17616.</title>
        <authorList>
            <person name="Copeland A."/>
            <person name="Lucas S."/>
            <person name="Lapidus A."/>
            <person name="Barry K."/>
            <person name="Glavina del Rio T."/>
            <person name="Dalin E."/>
            <person name="Tice H."/>
            <person name="Pitluck S."/>
            <person name="Chain P."/>
            <person name="Malfatti S."/>
            <person name="Shin M."/>
            <person name="Vergez L."/>
            <person name="Schmutz J."/>
            <person name="Larimer F."/>
            <person name="Land M."/>
            <person name="Hauser L."/>
            <person name="Kyrpides N."/>
            <person name="Kim E."/>
            <person name="Tiedje J."/>
            <person name="Richardson P."/>
        </authorList>
    </citation>
    <scope>NUCLEOTIDE SEQUENCE [LARGE SCALE GENOMIC DNA]</scope>
    <source>
        <strain>ATCC 17616 / 249</strain>
    </source>
</reference>
<reference key="2">
    <citation type="submission" date="2007-04" db="EMBL/GenBank/DDBJ databases">
        <title>Complete genome sequence of Burkholderia multivorans ATCC 17616.</title>
        <authorList>
            <person name="Ohtsubo Y."/>
            <person name="Yamashita A."/>
            <person name="Kurokawa K."/>
            <person name="Takami H."/>
            <person name="Yuhara S."/>
            <person name="Nishiyama E."/>
            <person name="Endo R."/>
            <person name="Miyazaki R."/>
            <person name="Ono A."/>
            <person name="Yano K."/>
            <person name="Ito M."/>
            <person name="Sota M."/>
            <person name="Yuji N."/>
            <person name="Hattori M."/>
            <person name="Tsuda M."/>
        </authorList>
    </citation>
    <scope>NUCLEOTIDE SEQUENCE [LARGE SCALE GENOMIC DNA]</scope>
    <source>
        <strain>ATCC 17616 / 249</strain>
    </source>
</reference>
<proteinExistence type="inferred from homology"/>
<keyword id="KW-0963">Cytoplasm</keyword>
<keyword id="KW-0342">GTP-binding</keyword>
<keyword id="KW-0378">Hydrolase</keyword>
<keyword id="KW-0460">Magnesium</keyword>
<keyword id="KW-0479">Metal-binding</keyword>
<keyword id="KW-0547">Nucleotide-binding</keyword>
<keyword id="KW-1185">Reference proteome</keyword>
<name>OBG_BURM1</name>
<evidence type="ECO:0000255" key="1">
    <source>
        <dbReference type="HAMAP-Rule" id="MF_01454"/>
    </source>
</evidence>
<evidence type="ECO:0000255" key="2">
    <source>
        <dbReference type="PROSITE-ProRule" id="PRU01231"/>
    </source>
</evidence>
<evidence type="ECO:0000256" key="3">
    <source>
        <dbReference type="SAM" id="MobiDB-lite"/>
    </source>
</evidence>
<gene>
    <name evidence="1" type="primary">obg</name>
    <name type="ordered locus">Bmul_2800</name>
    <name type="ordered locus">BMULJ_00437</name>
</gene>
<organism>
    <name type="scientific">Burkholderia multivorans (strain ATCC 17616 / 249)</name>
    <dbReference type="NCBI Taxonomy" id="395019"/>
    <lineage>
        <taxon>Bacteria</taxon>
        <taxon>Pseudomonadati</taxon>
        <taxon>Pseudomonadota</taxon>
        <taxon>Betaproteobacteria</taxon>
        <taxon>Burkholderiales</taxon>
        <taxon>Burkholderiaceae</taxon>
        <taxon>Burkholderia</taxon>
        <taxon>Burkholderia cepacia complex</taxon>
    </lineage>
</organism>